<accession>O24381</accession>
<evidence type="ECO:0000255" key="1"/>
<evidence type="ECO:0000256" key="2">
    <source>
        <dbReference type="SAM" id="MobiDB-lite"/>
    </source>
</evidence>
<evidence type="ECO:0000305" key="3"/>
<organism>
    <name type="scientific">Solanum tuberosum</name>
    <name type="common">Potato</name>
    <dbReference type="NCBI Taxonomy" id="4113"/>
    <lineage>
        <taxon>Eukaryota</taxon>
        <taxon>Viridiplantae</taxon>
        <taxon>Streptophyta</taxon>
        <taxon>Embryophyta</taxon>
        <taxon>Tracheophyta</taxon>
        <taxon>Spermatophyta</taxon>
        <taxon>Magnoliopsida</taxon>
        <taxon>eudicotyledons</taxon>
        <taxon>Gunneridae</taxon>
        <taxon>Pentapetalae</taxon>
        <taxon>asterids</taxon>
        <taxon>lamiids</taxon>
        <taxon>Solanales</taxon>
        <taxon>Solanaceae</taxon>
        <taxon>Solanoideae</taxon>
        <taxon>Solaneae</taxon>
        <taxon>Solanum</taxon>
    </lineage>
</organism>
<protein>
    <recommendedName>
        <fullName>Plastidic ATP/ADP-transporter</fullName>
    </recommendedName>
</protein>
<keyword id="KW-0067">ATP-binding</keyword>
<keyword id="KW-0150">Chloroplast</keyword>
<keyword id="KW-0472">Membrane</keyword>
<keyword id="KW-0547">Nucleotide-binding</keyword>
<keyword id="KW-0934">Plastid</keyword>
<keyword id="KW-1185">Reference proteome</keyword>
<keyword id="KW-0812">Transmembrane</keyword>
<keyword id="KW-1133">Transmembrane helix</keyword>
<keyword id="KW-0813">Transport</keyword>
<sequence>MEGVLQTRGLLSLPSKPKIKAFYPLPQGGLRNRFNSLSSLKPNPLNGVSLSSNGFQKVQGFDTKPQLFGQKKRCFPICKAEAAAAAGAADGQPLFVEKEQPKFMGIELVTLKKIIPLGAMFFCILFNYTILRDTKDVLVVTAKGSSAEIIPFLKTWVNLPMAIGFMLLYTKLANVLSKEALFYTVILPFIAFFGAFGFVLYPLSNYFHPTAFADKLLNTLGPRFLGPIAILRIWSFCLFYVMAELWGSVVVSVLFWGFANQITTVDEAKRFYPLFGLGANVALIFSGRTVKYFSSLRSSLGPGVDGWAISLKGMMSIVVMMGGAICFFYWWVNRNVALPTRSKKKKVKPNMTTMESLKFLVSSKYIRDLATLVVAYGISINLVEVTWKSKLKAQFPSPNEYSSFMGDFSTATGIATFTMMLLSQWIFDKYGWGAAAKITPTVLLLTGVGFFSLLLFGAPLAPTLAKFGMTPLLAAVYVGAMQNIFSKSAKYSLFDPCKEMAYIPLDEDTKVKGKAAIDVVCNPLGKSGGALIQQFMILTFGSLASSTPYLGGVLLVIVLAWLGAAKSLDGQFTQLRQEEDLEKEMERASLKIPVVSQNENGNGPLSSESSLNPAGGDSTNASSEPSSPRSL</sequence>
<feature type="chain" id="PRO_0000102591" description="Plastidic ATP/ADP-transporter">
    <location>
        <begin position="1"/>
        <end position="631"/>
    </location>
</feature>
<feature type="transmembrane region" description="Helical" evidence="1">
    <location>
        <begin position="106"/>
        <end position="126"/>
    </location>
</feature>
<feature type="transmembrane region" description="Helical" evidence="1">
    <location>
        <begin position="149"/>
        <end position="169"/>
    </location>
</feature>
<feature type="transmembrane region" description="Helical" evidence="1">
    <location>
        <begin position="180"/>
        <end position="200"/>
    </location>
</feature>
<feature type="transmembrane region" description="Helical" evidence="1">
    <location>
        <begin position="238"/>
        <end position="258"/>
    </location>
</feature>
<feature type="transmembrane region" description="Helical" evidence="1">
    <location>
        <begin position="271"/>
        <end position="290"/>
    </location>
</feature>
<feature type="transmembrane region" description="Helical" evidence="1">
    <location>
        <begin position="313"/>
        <end position="333"/>
    </location>
</feature>
<feature type="transmembrane region" description="Helical" evidence="1">
    <location>
        <begin position="369"/>
        <end position="389"/>
    </location>
</feature>
<feature type="transmembrane region" description="Helical" evidence="1">
    <location>
        <begin position="407"/>
        <end position="427"/>
    </location>
</feature>
<feature type="transmembrane region" description="Helical" evidence="1">
    <location>
        <begin position="442"/>
        <end position="462"/>
    </location>
</feature>
<feature type="transmembrane region" description="Helical" evidence="1">
    <location>
        <begin position="465"/>
        <end position="485"/>
    </location>
</feature>
<feature type="transmembrane region" description="Helical" evidence="1">
    <location>
        <begin position="543"/>
        <end position="563"/>
    </location>
</feature>
<feature type="region of interest" description="Disordered" evidence="2">
    <location>
        <begin position="586"/>
        <end position="631"/>
    </location>
</feature>
<feature type="compositionally biased region" description="Polar residues" evidence="2">
    <location>
        <begin position="595"/>
        <end position="631"/>
    </location>
</feature>
<comment type="subcellular location">
    <subcellularLocation>
        <location>Plastid</location>
        <location>Chloroplast membrane</location>
        <topology>Multi-pass membrane protein</topology>
    </subcellularLocation>
</comment>
<comment type="similarity">
    <text evidence="3">Belongs to the ADP/ATP translocase tlc (TC 2.A.12.2) family.</text>
</comment>
<dbReference type="EMBL" id="Y10821">
    <property type="protein sequence ID" value="CAA71785.1"/>
    <property type="molecule type" value="mRNA"/>
</dbReference>
<dbReference type="PIR" id="T07420">
    <property type="entry name" value="T07420"/>
</dbReference>
<dbReference type="RefSeq" id="NP_001274794.1">
    <property type="nucleotide sequence ID" value="NM_001287865.1"/>
</dbReference>
<dbReference type="FunCoup" id="O24381">
    <property type="interactions" value="646"/>
</dbReference>
<dbReference type="PaxDb" id="4113-PGSC0003DMT400073724"/>
<dbReference type="GeneID" id="102605062"/>
<dbReference type="KEGG" id="sot:102605062"/>
<dbReference type="eggNOG" id="ENOG502QSRY">
    <property type="taxonomic scope" value="Eukaryota"/>
</dbReference>
<dbReference type="InParanoid" id="O24381"/>
<dbReference type="OrthoDB" id="2190844at2759"/>
<dbReference type="Proteomes" id="UP000011115">
    <property type="component" value="Unassembled WGS sequence"/>
</dbReference>
<dbReference type="ExpressionAtlas" id="O24381">
    <property type="expression patterns" value="baseline and differential"/>
</dbReference>
<dbReference type="GO" id="GO:0031969">
    <property type="term" value="C:chloroplast membrane"/>
    <property type="evidence" value="ECO:0007669"/>
    <property type="project" value="UniProtKB-SubCell"/>
</dbReference>
<dbReference type="GO" id="GO:0005524">
    <property type="term" value="F:ATP binding"/>
    <property type="evidence" value="ECO:0007669"/>
    <property type="project" value="UniProtKB-KW"/>
</dbReference>
<dbReference type="GO" id="GO:0005471">
    <property type="term" value="F:ATP:ADP antiporter activity"/>
    <property type="evidence" value="ECO:0007669"/>
    <property type="project" value="InterPro"/>
</dbReference>
<dbReference type="InterPro" id="IPR004667">
    <property type="entry name" value="ADP_ATP_car_bac_type"/>
</dbReference>
<dbReference type="NCBIfam" id="TIGR00769">
    <property type="entry name" value="AAA"/>
    <property type="match status" value="1"/>
</dbReference>
<dbReference type="PANTHER" id="PTHR31187">
    <property type="match status" value="1"/>
</dbReference>
<dbReference type="PANTHER" id="PTHR31187:SF13">
    <property type="entry name" value="ADP,ATP CARRIER PROTEIN 1, CHLOROPLASTIC"/>
    <property type="match status" value="1"/>
</dbReference>
<dbReference type="Pfam" id="PF03219">
    <property type="entry name" value="TLC"/>
    <property type="match status" value="1"/>
</dbReference>
<name>TLC1_SOLTU</name>
<proteinExistence type="evidence at transcript level"/>
<reference key="1">
    <citation type="submission" date="1999-01" db="EMBL/GenBank/DDBJ databases">
        <authorList>
            <person name="Neuhaus E."/>
        </authorList>
    </citation>
    <scope>NUCLEOTIDE SEQUENCE [MRNA]</scope>
    <source>
        <strain>cv. Desiree</strain>
    </source>
</reference>